<name>RS16_THEFY</name>
<protein>
    <recommendedName>
        <fullName evidence="1">Small ribosomal subunit protein bS16</fullName>
    </recommendedName>
    <alternativeName>
        <fullName evidence="3">30S ribosomal protein S16</fullName>
    </alternativeName>
</protein>
<accession>Q47S67</accession>
<gene>
    <name evidence="1" type="primary">rpsP</name>
    <name type="ordered locus">Tfu_0662</name>
</gene>
<sequence length="146" mass="16215">MAVKIKLKRMGKVRTPQYRIVVADARAKRDGKAIEEIGKYHPKEEPSLIEVNSERVQYWLSVGAQPTDPVRHILKLTGDWQKFKGLPAPTKPLKVAEPKDKEAQEAAFQAVLKELVLPGSENKGGKSKKAEEKSAEKTAEKSEGEA</sequence>
<proteinExistence type="inferred from homology"/>
<evidence type="ECO:0000255" key="1">
    <source>
        <dbReference type="HAMAP-Rule" id="MF_00385"/>
    </source>
</evidence>
<evidence type="ECO:0000256" key="2">
    <source>
        <dbReference type="SAM" id="MobiDB-lite"/>
    </source>
</evidence>
<evidence type="ECO:0000305" key="3"/>
<feature type="chain" id="PRO_0000243888" description="Small ribosomal subunit protein bS16">
    <location>
        <begin position="1"/>
        <end position="146"/>
    </location>
</feature>
<feature type="region of interest" description="Disordered" evidence="2">
    <location>
        <begin position="119"/>
        <end position="146"/>
    </location>
</feature>
<feature type="compositionally biased region" description="Basic and acidic residues" evidence="2">
    <location>
        <begin position="128"/>
        <end position="146"/>
    </location>
</feature>
<reference key="1">
    <citation type="journal article" date="2007" name="J. Bacteriol.">
        <title>Genome sequence and analysis of the soil cellulolytic actinomycete Thermobifida fusca YX.</title>
        <authorList>
            <person name="Lykidis A."/>
            <person name="Mavromatis K."/>
            <person name="Ivanova N."/>
            <person name="Anderson I."/>
            <person name="Land M."/>
            <person name="DiBartolo G."/>
            <person name="Martinez M."/>
            <person name="Lapidus A."/>
            <person name="Lucas S."/>
            <person name="Copeland A."/>
            <person name="Richardson P."/>
            <person name="Wilson D.B."/>
            <person name="Kyrpides N."/>
        </authorList>
    </citation>
    <scope>NUCLEOTIDE SEQUENCE [LARGE SCALE GENOMIC DNA]</scope>
    <source>
        <strain>YX</strain>
    </source>
</reference>
<organism>
    <name type="scientific">Thermobifida fusca (strain YX)</name>
    <dbReference type="NCBI Taxonomy" id="269800"/>
    <lineage>
        <taxon>Bacteria</taxon>
        <taxon>Bacillati</taxon>
        <taxon>Actinomycetota</taxon>
        <taxon>Actinomycetes</taxon>
        <taxon>Streptosporangiales</taxon>
        <taxon>Nocardiopsidaceae</taxon>
        <taxon>Thermobifida</taxon>
    </lineage>
</organism>
<keyword id="KW-0687">Ribonucleoprotein</keyword>
<keyword id="KW-0689">Ribosomal protein</keyword>
<comment type="similarity">
    <text evidence="1">Belongs to the bacterial ribosomal protein bS16 family.</text>
</comment>
<dbReference type="EMBL" id="CP000088">
    <property type="protein sequence ID" value="AAZ54700.1"/>
    <property type="molecule type" value="Genomic_DNA"/>
</dbReference>
<dbReference type="RefSeq" id="WP_011291109.1">
    <property type="nucleotide sequence ID" value="NC_007333.1"/>
</dbReference>
<dbReference type="SMR" id="Q47S67"/>
<dbReference type="STRING" id="269800.Tfu_0662"/>
<dbReference type="KEGG" id="tfu:Tfu_0662"/>
<dbReference type="eggNOG" id="COG0228">
    <property type="taxonomic scope" value="Bacteria"/>
</dbReference>
<dbReference type="HOGENOM" id="CLU_100590_1_0_11"/>
<dbReference type="OrthoDB" id="9807878at2"/>
<dbReference type="GO" id="GO:0005737">
    <property type="term" value="C:cytoplasm"/>
    <property type="evidence" value="ECO:0007669"/>
    <property type="project" value="UniProtKB-ARBA"/>
</dbReference>
<dbReference type="GO" id="GO:0015935">
    <property type="term" value="C:small ribosomal subunit"/>
    <property type="evidence" value="ECO:0007669"/>
    <property type="project" value="TreeGrafter"/>
</dbReference>
<dbReference type="GO" id="GO:0003735">
    <property type="term" value="F:structural constituent of ribosome"/>
    <property type="evidence" value="ECO:0007669"/>
    <property type="project" value="InterPro"/>
</dbReference>
<dbReference type="GO" id="GO:0006412">
    <property type="term" value="P:translation"/>
    <property type="evidence" value="ECO:0007669"/>
    <property type="project" value="UniProtKB-UniRule"/>
</dbReference>
<dbReference type="Gene3D" id="3.30.1320.10">
    <property type="match status" value="1"/>
</dbReference>
<dbReference type="HAMAP" id="MF_00385">
    <property type="entry name" value="Ribosomal_bS16"/>
    <property type="match status" value="1"/>
</dbReference>
<dbReference type="InterPro" id="IPR000307">
    <property type="entry name" value="Ribosomal_bS16"/>
</dbReference>
<dbReference type="InterPro" id="IPR020592">
    <property type="entry name" value="Ribosomal_bS16_CS"/>
</dbReference>
<dbReference type="InterPro" id="IPR023803">
    <property type="entry name" value="Ribosomal_bS16_dom_sf"/>
</dbReference>
<dbReference type="NCBIfam" id="NF011093">
    <property type="entry name" value="PRK14520.1"/>
    <property type="match status" value="1"/>
</dbReference>
<dbReference type="NCBIfam" id="TIGR00002">
    <property type="entry name" value="S16"/>
    <property type="match status" value="1"/>
</dbReference>
<dbReference type="PANTHER" id="PTHR12919">
    <property type="entry name" value="30S RIBOSOMAL PROTEIN S16"/>
    <property type="match status" value="1"/>
</dbReference>
<dbReference type="PANTHER" id="PTHR12919:SF20">
    <property type="entry name" value="SMALL RIBOSOMAL SUBUNIT PROTEIN BS16M"/>
    <property type="match status" value="1"/>
</dbReference>
<dbReference type="Pfam" id="PF00886">
    <property type="entry name" value="Ribosomal_S16"/>
    <property type="match status" value="1"/>
</dbReference>
<dbReference type="SUPFAM" id="SSF54565">
    <property type="entry name" value="Ribosomal protein S16"/>
    <property type="match status" value="1"/>
</dbReference>
<dbReference type="PROSITE" id="PS00732">
    <property type="entry name" value="RIBOSOMAL_S16"/>
    <property type="match status" value="1"/>
</dbReference>